<keyword id="KW-0687">Ribonucleoprotein</keyword>
<keyword id="KW-0689">Ribosomal protein</keyword>
<keyword id="KW-0694">RNA-binding</keyword>
<keyword id="KW-0699">rRNA-binding</keyword>
<keyword id="KW-0820">tRNA-binding</keyword>
<dbReference type="EMBL" id="CP000736">
    <property type="protein sequence ID" value="ABR53136.1"/>
    <property type="molecule type" value="Genomic_DNA"/>
</dbReference>
<dbReference type="SMR" id="A6U3W8"/>
<dbReference type="KEGG" id="sah:SaurJH1_2311"/>
<dbReference type="HOGENOM" id="CLU_078858_2_1_9"/>
<dbReference type="GO" id="GO:0022625">
    <property type="term" value="C:cytosolic large ribosomal subunit"/>
    <property type="evidence" value="ECO:0007669"/>
    <property type="project" value="TreeGrafter"/>
</dbReference>
<dbReference type="GO" id="GO:0019843">
    <property type="term" value="F:rRNA binding"/>
    <property type="evidence" value="ECO:0007669"/>
    <property type="project" value="UniProtKB-UniRule"/>
</dbReference>
<dbReference type="GO" id="GO:0003735">
    <property type="term" value="F:structural constituent of ribosome"/>
    <property type="evidence" value="ECO:0007669"/>
    <property type="project" value="InterPro"/>
</dbReference>
<dbReference type="GO" id="GO:0000049">
    <property type="term" value="F:tRNA binding"/>
    <property type="evidence" value="ECO:0007669"/>
    <property type="project" value="UniProtKB-KW"/>
</dbReference>
<dbReference type="GO" id="GO:0006412">
    <property type="term" value="P:translation"/>
    <property type="evidence" value="ECO:0007669"/>
    <property type="project" value="UniProtKB-UniRule"/>
</dbReference>
<dbReference type="CDD" id="cd01433">
    <property type="entry name" value="Ribosomal_L16_L10e"/>
    <property type="match status" value="1"/>
</dbReference>
<dbReference type="FunFam" id="3.90.1170.10:FF:000001">
    <property type="entry name" value="50S ribosomal protein L16"/>
    <property type="match status" value="1"/>
</dbReference>
<dbReference type="Gene3D" id="3.90.1170.10">
    <property type="entry name" value="Ribosomal protein L10e/L16"/>
    <property type="match status" value="1"/>
</dbReference>
<dbReference type="HAMAP" id="MF_01342">
    <property type="entry name" value="Ribosomal_uL16"/>
    <property type="match status" value="1"/>
</dbReference>
<dbReference type="InterPro" id="IPR047873">
    <property type="entry name" value="Ribosomal_uL16"/>
</dbReference>
<dbReference type="InterPro" id="IPR000114">
    <property type="entry name" value="Ribosomal_uL16_bact-type"/>
</dbReference>
<dbReference type="InterPro" id="IPR020798">
    <property type="entry name" value="Ribosomal_uL16_CS"/>
</dbReference>
<dbReference type="InterPro" id="IPR016180">
    <property type="entry name" value="Ribosomal_uL16_dom"/>
</dbReference>
<dbReference type="InterPro" id="IPR036920">
    <property type="entry name" value="Ribosomal_uL16_sf"/>
</dbReference>
<dbReference type="NCBIfam" id="TIGR01164">
    <property type="entry name" value="rplP_bact"/>
    <property type="match status" value="1"/>
</dbReference>
<dbReference type="PANTHER" id="PTHR12220">
    <property type="entry name" value="50S/60S RIBOSOMAL PROTEIN L16"/>
    <property type="match status" value="1"/>
</dbReference>
<dbReference type="PANTHER" id="PTHR12220:SF13">
    <property type="entry name" value="LARGE RIBOSOMAL SUBUNIT PROTEIN UL16M"/>
    <property type="match status" value="1"/>
</dbReference>
<dbReference type="Pfam" id="PF00252">
    <property type="entry name" value="Ribosomal_L16"/>
    <property type="match status" value="1"/>
</dbReference>
<dbReference type="PRINTS" id="PR00060">
    <property type="entry name" value="RIBOSOMALL16"/>
</dbReference>
<dbReference type="SUPFAM" id="SSF54686">
    <property type="entry name" value="Ribosomal protein L16p/L10e"/>
    <property type="match status" value="1"/>
</dbReference>
<dbReference type="PROSITE" id="PS00586">
    <property type="entry name" value="RIBOSOMAL_L16_1"/>
    <property type="match status" value="1"/>
</dbReference>
<dbReference type="PROSITE" id="PS00701">
    <property type="entry name" value="RIBOSOMAL_L16_2"/>
    <property type="match status" value="1"/>
</dbReference>
<sequence length="144" mass="16242">MLLPKRVKYRRQHRPKTTGRSKGGNYVTFGEFGLQATTTSWITSRQIESARIAMTRYMKRGGKVWIKIFPHTPYTKKPLEVRMGAGKGAVEGWIAVVKPGRILFEVAGVSEEVAREALRLASHKLPVKTKFVKREELGGETNES</sequence>
<evidence type="ECO:0000255" key="1">
    <source>
        <dbReference type="HAMAP-Rule" id="MF_01342"/>
    </source>
</evidence>
<evidence type="ECO:0000256" key="2">
    <source>
        <dbReference type="SAM" id="MobiDB-lite"/>
    </source>
</evidence>
<evidence type="ECO:0000305" key="3"/>
<gene>
    <name evidence="1" type="primary">rplP</name>
    <name type="ordered locus">SaurJH1_2311</name>
</gene>
<feature type="chain" id="PRO_1000086781" description="Large ribosomal subunit protein uL16">
    <location>
        <begin position="1"/>
        <end position="144"/>
    </location>
</feature>
<feature type="region of interest" description="Disordered" evidence="2">
    <location>
        <begin position="1"/>
        <end position="23"/>
    </location>
</feature>
<feature type="compositionally biased region" description="Basic residues" evidence="2">
    <location>
        <begin position="1"/>
        <end position="19"/>
    </location>
</feature>
<protein>
    <recommendedName>
        <fullName evidence="1">Large ribosomal subunit protein uL16</fullName>
    </recommendedName>
    <alternativeName>
        <fullName evidence="3">50S ribosomal protein L16</fullName>
    </alternativeName>
</protein>
<accession>A6U3W8</accession>
<proteinExistence type="inferred from homology"/>
<name>RL16_STAA2</name>
<organism>
    <name type="scientific">Staphylococcus aureus (strain JH1)</name>
    <dbReference type="NCBI Taxonomy" id="359787"/>
    <lineage>
        <taxon>Bacteria</taxon>
        <taxon>Bacillati</taxon>
        <taxon>Bacillota</taxon>
        <taxon>Bacilli</taxon>
        <taxon>Bacillales</taxon>
        <taxon>Staphylococcaceae</taxon>
        <taxon>Staphylococcus</taxon>
    </lineage>
</organism>
<comment type="function">
    <text evidence="1">Binds 23S rRNA and is also seen to make contacts with the A and possibly P site tRNAs.</text>
</comment>
<comment type="subunit">
    <text evidence="1">Part of the 50S ribosomal subunit.</text>
</comment>
<comment type="similarity">
    <text evidence="1">Belongs to the universal ribosomal protein uL16 family.</text>
</comment>
<reference key="1">
    <citation type="submission" date="2007-06" db="EMBL/GenBank/DDBJ databases">
        <title>Complete sequence of chromosome of Staphylococcus aureus subsp. aureus JH1.</title>
        <authorList>
            <consortium name="US DOE Joint Genome Institute"/>
            <person name="Copeland A."/>
            <person name="Lucas S."/>
            <person name="Lapidus A."/>
            <person name="Barry K."/>
            <person name="Detter J.C."/>
            <person name="Glavina del Rio T."/>
            <person name="Hammon N."/>
            <person name="Israni S."/>
            <person name="Dalin E."/>
            <person name="Tice H."/>
            <person name="Pitluck S."/>
            <person name="Chain P."/>
            <person name="Malfatti S."/>
            <person name="Shin M."/>
            <person name="Vergez L."/>
            <person name="Schmutz J."/>
            <person name="Larimer F."/>
            <person name="Land M."/>
            <person name="Hauser L."/>
            <person name="Kyrpides N."/>
            <person name="Ivanova N."/>
            <person name="Tomasz A."/>
            <person name="Richardson P."/>
        </authorList>
    </citation>
    <scope>NUCLEOTIDE SEQUENCE [LARGE SCALE GENOMIC DNA]</scope>
    <source>
        <strain>JH1</strain>
    </source>
</reference>